<gene>
    <name evidence="1" type="primary">rpmB</name>
    <name type="ordered locus">Shew185_0377</name>
</gene>
<sequence>MSRVCQVTGKKPMVGNNRSHAKNATRRRFLPNLQNHRFWLEEEKRFVQLRVSTKGIRLIDKKGIEVVVAELRARGEKV</sequence>
<comment type="similarity">
    <text evidence="1">Belongs to the bacterial ribosomal protein bL28 family.</text>
</comment>
<reference key="1">
    <citation type="submission" date="2007-07" db="EMBL/GenBank/DDBJ databases">
        <title>Complete sequence of chromosome of Shewanella baltica OS185.</title>
        <authorList>
            <consortium name="US DOE Joint Genome Institute"/>
            <person name="Copeland A."/>
            <person name="Lucas S."/>
            <person name="Lapidus A."/>
            <person name="Barry K."/>
            <person name="Glavina del Rio T."/>
            <person name="Dalin E."/>
            <person name="Tice H."/>
            <person name="Pitluck S."/>
            <person name="Sims D."/>
            <person name="Brettin T."/>
            <person name="Bruce D."/>
            <person name="Detter J.C."/>
            <person name="Han C."/>
            <person name="Schmutz J."/>
            <person name="Larimer F."/>
            <person name="Land M."/>
            <person name="Hauser L."/>
            <person name="Kyrpides N."/>
            <person name="Mikhailova N."/>
            <person name="Brettar I."/>
            <person name="Rodrigues J."/>
            <person name="Konstantinidis K."/>
            <person name="Tiedje J."/>
            <person name="Richardson P."/>
        </authorList>
    </citation>
    <scope>NUCLEOTIDE SEQUENCE [LARGE SCALE GENOMIC DNA]</scope>
    <source>
        <strain>OS185</strain>
    </source>
</reference>
<organism>
    <name type="scientific">Shewanella baltica (strain OS185)</name>
    <dbReference type="NCBI Taxonomy" id="402882"/>
    <lineage>
        <taxon>Bacteria</taxon>
        <taxon>Pseudomonadati</taxon>
        <taxon>Pseudomonadota</taxon>
        <taxon>Gammaproteobacteria</taxon>
        <taxon>Alteromonadales</taxon>
        <taxon>Shewanellaceae</taxon>
        <taxon>Shewanella</taxon>
    </lineage>
</organism>
<proteinExistence type="inferred from homology"/>
<feature type="chain" id="PRO_1000007347" description="Large ribosomal subunit protein bL28">
    <location>
        <begin position="1"/>
        <end position="78"/>
    </location>
</feature>
<feature type="region of interest" description="Disordered" evidence="2">
    <location>
        <begin position="1"/>
        <end position="21"/>
    </location>
</feature>
<keyword id="KW-0687">Ribonucleoprotein</keyword>
<keyword id="KW-0689">Ribosomal protein</keyword>
<evidence type="ECO:0000255" key="1">
    <source>
        <dbReference type="HAMAP-Rule" id="MF_00373"/>
    </source>
</evidence>
<evidence type="ECO:0000256" key="2">
    <source>
        <dbReference type="SAM" id="MobiDB-lite"/>
    </source>
</evidence>
<evidence type="ECO:0000305" key="3"/>
<name>RL28_SHEB8</name>
<accession>A6WIA7</accession>
<protein>
    <recommendedName>
        <fullName evidence="1">Large ribosomal subunit protein bL28</fullName>
    </recommendedName>
    <alternativeName>
        <fullName evidence="3">50S ribosomal protein L28</fullName>
    </alternativeName>
</protein>
<dbReference type="EMBL" id="CP000753">
    <property type="protein sequence ID" value="ABS06546.1"/>
    <property type="molecule type" value="Genomic_DNA"/>
</dbReference>
<dbReference type="RefSeq" id="WP_006079870.1">
    <property type="nucleotide sequence ID" value="NC_009665.1"/>
</dbReference>
<dbReference type="SMR" id="A6WIA7"/>
<dbReference type="GeneID" id="94729700"/>
<dbReference type="KEGG" id="sbm:Shew185_0377"/>
<dbReference type="HOGENOM" id="CLU_064548_3_1_6"/>
<dbReference type="GO" id="GO:0022625">
    <property type="term" value="C:cytosolic large ribosomal subunit"/>
    <property type="evidence" value="ECO:0007669"/>
    <property type="project" value="TreeGrafter"/>
</dbReference>
<dbReference type="GO" id="GO:0003735">
    <property type="term" value="F:structural constituent of ribosome"/>
    <property type="evidence" value="ECO:0007669"/>
    <property type="project" value="InterPro"/>
</dbReference>
<dbReference type="GO" id="GO:0006412">
    <property type="term" value="P:translation"/>
    <property type="evidence" value="ECO:0007669"/>
    <property type="project" value="UniProtKB-UniRule"/>
</dbReference>
<dbReference type="FunFam" id="2.30.170.40:FF:000001">
    <property type="entry name" value="50S ribosomal protein L28"/>
    <property type="match status" value="1"/>
</dbReference>
<dbReference type="Gene3D" id="2.30.170.40">
    <property type="entry name" value="Ribosomal protein L28/L24"/>
    <property type="match status" value="1"/>
</dbReference>
<dbReference type="HAMAP" id="MF_00373">
    <property type="entry name" value="Ribosomal_bL28"/>
    <property type="match status" value="1"/>
</dbReference>
<dbReference type="InterPro" id="IPR026569">
    <property type="entry name" value="Ribosomal_bL28"/>
</dbReference>
<dbReference type="InterPro" id="IPR034704">
    <property type="entry name" value="Ribosomal_bL28/bL31-like_sf"/>
</dbReference>
<dbReference type="InterPro" id="IPR001383">
    <property type="entry name" value="Ribosomal_bL28_bact-type"/>
</dbReference>
<dbReference type="InterPro" id="IPR037147">
    <property type="entry name" value="Ribosomal_bL28_sf"/>
</dbReference>
<dbReference type="NCBIfam" id="TIGR00009">
    <property type="entry name" value="L28"/>
    <property type="match status" value="1"/>
</dbReference>
<dbReference type="PANTHER" id="PTHR13528">
    <property type="entry name" value="39S RIBOSOMAL PROTEIN L28, MITOCHONDRIAL"/>
    <property type="match status" value="1"/>
</dbReference>
<dbReference type="PANTHER" id="PTHR13528:SF2">
    <property type="entry name" value="LARGE RIBOSOMAL SUBUNIT PROTEIN BL28M"/>
    <property type="match status" value="1"/>
</dbReference>
<dbReference type="Pfam" id="PF00830">
    <property type="entry name" value="Ribosomal_L28"/>
    <property type="match status" value="1"/>
</dbReference>
<dbReference type="SUPFAM" id="SSF143800">
    <property type="entry name" value="L28p-like"/>
    <property type="match status" value="1"/>
</dbReference>